<sequence length="679" mass="75725">MTQVAKKILVTCALPYANGSIHLGHMLEHIQADIWVRYQRMRGHQIYFICADDAHGTPIMLKAQQLGIAPEEMINEMNLEHQTDFAGFGISYDNYHSTHSEENQQLSTLIYQRLKENGFIKSRTISQLFDPEKVMFLPDRFVKGSCPKCHSPDQYGDNCEVCGATYNPTDLINPKSAVSGTTPVMRESEHFFFDLPAFSEMMRAWTRSGALQEQVANKMQEWFESGLQEWDISRDAPYFGFEVPDAPGKYFYVWLDAPIGYMSAFQNLCQKRSDLRFDEFWDVDSKADLYHFIGKDIVYFHSLFWPAMLEGSHFRKPTNLFVHGYVTVNGAKMSKSRGTFIKASTYLAHLDAECLRYYYAAKLSSRIDDIDLNLEDFIQRVNADIVNKVVNLASRNAGFINKRFDGQLAATVADPALYATFVNAATSIGDAFSSRETSRAIREIMALADLANRYVDEQAPWVVAKQEGREADLQAICSMGIQLFRVLMTYLKPVLPSLAERAKAFLATPLDWDDLSAPLLSHRIRPFKALFSRIEAAQVDAVIEVSRLEAAAAGEPAAAPAGALAEAPIAPTINFDDFAKVDMRVALIKRAESVKGSDKLLKLTLDLGGTSRQVFSGIRAAYPDPQVLEGRLTIMVANLAPRKMRFGISEGMVMAAGPGGKDIFLLSPDAGALPGMPVK</sequence>
<organism>
    <name type="scientific">Sodalis glossinidius (strain morsitans)</name>
    <dbReference type="NCBI Taxonomy" id="343509"/>
    <lineage>
        <taxon>Bacteria</taxon>
        <taxon>Pseudomonadati</taxon>
        <taxon>Pseudomonadota</taxon>
        <taxon>Gammaproteobacteria</taxon>
        <taxon>Enterobacterales</taxon>
        <taxon>Bruguierivoracaceae</taxon>
        <taxon>Sodalis</taxon>
    </lineage>
</organism>
<keyword id="KW-0030">Aminoacyl-tRNA synthetase</keyword>
<keyword id="KW-0067">ATP-binding</keyword>
<keyword id="KW-0963">Cytoplasm</keyword>
<keyword id="KW-0436">Ligase</keyword>
<keyword id="KW-0479">Metal-binding</keyword>
<keyword id="KW-0547">Nucleotide-binding</keyword>
<keyword id="KW-0648">Protein biosynthesis</keyword>
<keyword id="KW-0694">RNA-binding</keyword>
<keyword id="KW-0820">tRNA-binding</keyword>
<keyword id="KW-0862">Zinc</keyword>
<proteinExistence type="inferred from homology"/>
<protein>
    <recommendedName>
        <fullName evidence="1">Methionine--tRNA ligase</fullName>
        <ecNumber evidence="1">6.1.1.10</ecNumber>
    </recommendedName>
    <alternativeName>
        <fullName evidence="1">Methionyl-tRNA synthetase</fullName>
        <shortName evidence="1">MetRS</shortName>
    </alternativeName>
</protein>
<evidence type="ECO:0000255" key="1">
    <source>
        <dbReference type="HAMAP-Rule" id="MF_00098"/>
    </source>
</evidence>
<comment type="function">
    <text evidence="1">Is required not only for elongation of protein synthesis but also for the initiation of all mRNA translation through initiator tRNA(fMet) aminoacylation.</text>
</comment>
<comment type="catalytic activity">
    <reaction evidence="1">
        <text>tRNA(Met) + L-methionine + ATP = L-methionyl-tRNA(Met) + AMP + diphosphate</text>
        <dbReference type="Rhea" id="RHEA:13481"/>
        <dbReference type="Rhea" id="RHEA-COMP:9667"/>
        <dbReference type="Rhea" id="RHEA-COMP:9698"/>
        <dbReference type="ChEBI" id="CHEBI:30616"/>
        <dbReference type="ChEBI" id="CHEBI:33019"/>
        <dbReference type="ChEBI" id="CHEBI:57844"/>
        <dbReference type="ChEBI" id="CHEBI:78442"/>
        <dbReference type="ChEBI" id="CHEBI:78530"/>
        <dbReference type="ChEBI" id="CHEBI:456215"/>
        <dbReference type="EC" id="6.1.1.10"/>
    </reaction>
</comment>
<comment type="cofactor">
    <cofactor evidence="1">
        <name>Zn(2+)</name>
        <dbReference type="ChEBI" id="CHEBI:29105"/>
    </cofactor>
    <text evidence="1">Binds 1 zinc ion per subunit.</text>
</comment>
<comment type="subunit">
    <text evidence="1">Homodimer.</text>
</comment>
<comment type="subcellular location">
    <subcellularLocation>
        <location evidence="1">Cytoplasm</location>
    </subcellularLocation>
</comment>
<comment type="similarity">
    <text evidence="1">Belongs to the class-I aminoacyl-tRNA synthetase family. MetG type 1 subfamily.</text>
</comment>
<accession>Q2NUD0</accession>
<feature type="chain" id="PRO_0000331918" description="Methionine--tRNA ligase">
    <location>
        <begin position="1"/>
        <end position="679"/>
    </location>
</feature>
<feature type="domain" description="tRNA-binding" evidence="1">
    <location>
        <begin position="577"/>
        <end position="679"/>
    </location>
</feature>
<feature type="short sequence motif" description="'HIGH' region">
    <location>
        <begin position="15"/>
        <end position="25"/>
    </location>
</feature>
<feature type="short sequence motif" description="'KMSKS' region">
    <location>
        <begin position="332"/>
        <end position="336"/>
    </location>
</feature>
<feature type="binding site" evidence="1">
    <location>
        <position position="146"/>
    </location>
    <ligand>
        <name>Zn(2+)</name>
        <dbReference type="ChEBI" id="CHEBI:29105"/>
    </ligand>
</feature>
<feature type="binding site" evidence="1">
    <location>
        <position position="149"/>
    </location>
    <ligand>
        <name>Zn(2+)</name>
        <dbReference type="ChEBI" id="CHEBI:29105"/>
    </ligand>
</feature>
<feature type="binding site" evidence="1">
    <location>
        <position position="159"/>
    </location>
    <ligand>
        <name>Zn(2+)</name>
        <dbReference type="ChEBI" id="CHEBI:29105"/>
    </ligand>
</feature>
<feature type="binding site" evidence="1">
    <location>
        <position position="162"/>
    </location>
    <ligand>
        <name>Zn(2+)</name>
        <dbReference type="ChEBI" id="CHEBI:29105"/>
    </ligand>
</feature>
<feature type="binding site" evidence="1">
    <location>
        <position position="335"/>
    </location>
    <ligand>
        <name>ATP</name>
        <dbReference type="ChEBI" id="CHEBI:30616"/>
    </ligand>
</feature>
<reference key="1">
    <citation type="journal article" date="2006" name="Genome Res.">
        <title>Massive genome erosion and functional adaptations provide insights into the symbiotic lifestyle of Sodalis glossinidius in the tsetse host.</title>
        <authorList>
            <person name="Toh H."/>
            <person name="Weiss B.L."/>
            <person name="Perkin S.A.H."/>
            <person name="Yamashita A."/>
            <person name="Oshima K."/>
            <person name="Hattori M."/>
            <person name="Aksoy S."/>
        </authorList>
    </citation>
    <scope>NUCLEOTIDE SEQUENCE [LARGE SCALE GENOMIC DNA]</scope>
    <source>
        <strain>morsitans</strain>
    </source>
</reference>
<name>SYM_SODGM</name>
<dbReference type="EC" id="6.1.1.10" evidence="1"/>
<dbReference type="EMBL" id="AP008232">
    <property type="protein sequence ID" value="BAE74245.1"/>
    <property type="molecule type" value="Genomic_DNA"/>
</dbReference>
<dbReference type="RefSeq" id="WP_011410831.1">
    <property type="nucleotide sequence ID" value="NC_007712.1"/>
</dbReference>
<dbReference type="SMR" id="Q2NUD0"/>
<dbReference type="STRING" id="343509.SG0970"/>
<dbReference type="KEGG" id="sgl:SG0970"/>
<dbReference type="eggNOG" id="COG0073">
    <property type="taxonomic scope" value="Bacteria"/>
</dbReference>
<dbReference type="eggNOG" id="COG0143">
    <property type="taxonomic scope" value="Bacteria"/>
</dbReference>
<dbReference type="HOGENOM" id="CLU_009710_7_0_6"/>
<dbReference type="OrthoDB" id="9810191at2"/>
<dbReference type="BioCyc" id="SGLO343509:SGP1_RS08360-MONOMER"/>
<dbReference type="Proteomes" id="UP000001932">
    <property type="component" value="Chromosome"/>
</dbReference>
<dbReference type="GO" id="GO:0005829">
    <property type="term" value="C:cytosol"/>
    <property type="evidence" value="ECO:0007669"/>
    <property type="project" value="TreeGrafter"/>
</dbReference>
<dbReference type="GO" id="GO:0005524">
    <property type="term" value="F:ATP binding"/>
    <property type="evidence" value="ECO:0007669"/>
    <property type="project" value="UniProtKB-UniRule"/>
</dbReference>
<dbReference type="GO" id="GO:0046872">
    <property type="term" value="F:metal ion binding"/>
    <property type="evidence" value="ECO:0007669"/>
    <property type="project" value="UniProtKB-KW"/>
</dbReference>
<dbReference type="GO" id="GO:0004825">
    <property type="term" value="F:methionine-tRNA ligase activity"/>
    <property type="evidence" value="ECO:0007669"/>
    <property type="project" value="UniProtKB-UniRule"/>
</dbReference>
<dbReference type="GO" id="GO:0000049">
    <property type="term" value="F:tRNA binding"/>
    <property type="evidence" value="ECO:0007669"/>
    <property type="project" value="UniProtKB-KW"/>
</dbReference>
<dbReference type="GO" id="GO:0006431">
    <property type="term" value="P:methionyl-tRNA aminoacylation"/>
    <property type="evidence" value="ECO:0007669"/>
    <property type="project" value="UniProtKB-UniRule"/>
</dbReference>
<dbReference type="CDD" id="cd07957">
    <property type="entry name" value="Anticodon_Ia_Met"/>
    <property type="match status" value="1"/>
</dbReference>
<dbReference type="CDD" id="cd00814">
    <property type="entry name" value="MetRS_core"/>
    <property type="match status" value="1"/>
</dbReference>
<dbReference type="CDD" id="cd02800">
    <property type="entry name" value="tRNA_bind_EcMetRS_like"/>
    <property type="match status" value="1"/>
</dbReference>
<dbReference type="FunFam" id="1.10.730.10:FF:000005">
    <property type="entry name" value="Methionine--tRNA ligase"/>
    <property type="match status" value="1"/>
</dbReference>
<dbReference type="FunFam" id="2.20.28.20:FF:000001">
    <property type="entry name" value="Methionine--tRNA ligase"/>
    <property type="match status" value="1"/>
</dbReference>
<dbReference type="FunFam" id="2.40.50.140:FF:000042">
    <property type="entry name" value="Methionine--tRNA ligase"/>
    <property type="match status" value="1"/>
</dbReference>
<dbReference type="Gene3D" id="3.40.50.620">
    <property type="entry name" value="HUPs"/>
    <property type="match status" value="1"/>
</dbReference>
<dbReference type="Gene3D" id="1.10.730.10">
    <property type="entry name" value="Isoleucyl-tRNA Synthetase, Domain 1"/>
    <property type="match status" value="1"/>
</dbReference>
<dbReference type="Gene3D" id="2.20.28.20">
    <property type="entry name" value="Methionyl-tRNA synthetase, Zn-domain"/>
    <property type="match status" value="1"/>
</dbReference>
<dbReference type="Gene3D" id="2.40.50.140">
    <property type="entry name" value="Nucleic acid-binding proteins"/>
    <property type="match status" value="1"/>
</dbReference>
<dbReference type="HAMAP" id="MF_00098">
    <property type="entry name" value="Met_tRNA_synth_type1"/>
    <property type="match status" value="1"/>
</dbReference>
<dbReference type="InterPro" id="IPR001412">
    <property type="entry name" value="aa-tRNA-synth_I_CS"/>
</dbReference>
<dbReference type="InterPro" id="IPR041872">
    <property type="entry name" value="Anticodon_Met"/>
</dbReference>
<dbReference type="InterPro" id="IPR004495">
    <property type="entry name" value="Met-tRNA-synth_bsu_C"/>
</dbReference>
<dbReference type="InterPro" id="IPR023458">
    <property type="entry name" value="Met-tRNA_ligase_1"/>
</dbReference>
<dbReference type="InterPro" id="IPR014758">
    <property type="entry name" value="Met-tRNA_synth"/>
</dbReference>
<dbReference type="InterPro" id="IPR015413">
    <property type="entry name" value="Methionyl/Leucyl_tRNA_Synth"/>
</dbReference>
<dbReference type="InterPro" id="IPR033911">
    <property type="entry name" value="MetRS_core"/>
</dbReference>
<dbReference type="InterPro" id="IPR029038">
    <property type="entry name" value="MetRS_Zn"/>
</dbReference>
<dbReference type="InterPro" id="IPR012340">
    <property type="entry name" value="NA-bd_OB-fold"/>
</dbReference>
<dbReference type="InterPro" id="IPR014729">
    <property type="entry name" value="Rossmann-like_a/b/a_fold"/>
</dbReference>
<dbReference type="InterPro" id="IPR002547">
    <property type="entry name" value="tRNA-bd_dom"/>
</dbReference>
<dbReference type="InterPro" id="IPR009080">
    <property type="entry name" value="tRNAsynth_Ia_anticodon-bd"/>
</dbReference>
<dbReference type="NCBIfam" id="TIGR00398">
    <property type="entry name" value="metG"/>
    <property type="match status" value="1"/>
</dbReference>
<dbReference type="NCBIfam" id="TIGR00399">
    <property type="entry name" value="metG_C_term"/>
    <property type="match status" value="1"/>
</dbReference>
<dbReference type="NCBIfam" id="NF001100">
    <property type="entry name" value="PRK00133.1"/>
    <property type="match status" value="1"/>
</dbReference>
<dbReference type="PANTHER" id="PTHR45765">
    <property type="entry name" value="METHIONINE--TRNA LIGASE"/>
    <property type="match status" value="1"/>
</dbReference>
<dbReference type="PANTHER" id="PTHR45765:SF1">
    <property type="entry name" value="METHIONINE--TRNA LIGASE, CYTOPLASMIC"/>
    <property type="match status" value="1"/>
</dbReference>
<dbReference type="Pfam" id="PF19303">
    <property type="entry name" value="Anticodon_3"/>
    <property type="match status" value="1"/>
</dbReference>
<dbReference type="Pfam" id="PF09334">
    <property type="entry name" value="tRNA-synt_1g"/>
    <property type="match status" value="1"/>
</dbReference>
<dbReference type="Pfam" id="PF01588">
    <property type="entry name" value="tRNA_bind"/>
    <property type="match status" value="1"/>
</dbReference>
<dbReference type="PRINTS" id="PR01041">
    <property type="entry name" value="TRNASYNTHMET"/>
</dbReference>
<dbReference type="SUPFAM" id="SSF47323">
    <property type="entry name" value="Anticodon-binding domain of a subclass of class I aminoacyl-tRNA synthetases"/>
    <property type="match status" value="1"/>
</dbReference>
<dbReference type="SUPFAM" id="SSF57770">
    <property type="entry name" value="Methionyl-tRNA synthetase (MetRS), Zn-domain"/>
    <property type="match status" value="1"/>
</dbReference>
<dbReference type="SUPFAM" id="SSF50249">
    <property type="entry name" value="Nucleic acid-binding proteins"/>
    <property type="match status" value="1"/>
</dbReference>
<dbReference type="SUPFAM" id="SSF52374">
    <property type="entry name" value="Nucleotidylyl transferase"/>
    <property type="match status" value="1"/>
</dbReference>
<dbReference type="PROSITE" id="PS00178">
    <property type="entry name" value="AA_TRNA_LIGASE_I"/>
    <property type="match status" value="1"/>
</dbReference>
<dbReference type="PROSITE" id="PS50886">
    <property type="entry name" value="TRBD"/>
    <property type="match status" value="1"/>
</dbReference>
<gene>
    <name evidence="1" type="primary">metG</name>
    <name type="ordered locus">SG0970</name>
</gene>